<accession>O22433</accession>
<evidence type="ECO:0000269" key="1">
    <source>
    </source>
</evidence>
<evidence type="ECO:0000269" key="2">
    <source>
    </source>
</evidence>
<evidence type="ECO:0000269" key="3">
    <source ref="8"/>
</evidence>
<evidence type="ECO:0000305" key="4"/>
<evidence type="ECO:0000312" key="5">
    <source>
        <dbReference type="Araport" id="AT3G15353"/>
    </source>
</evidence>
<evidence type="ECO:0000312" key="6">
    <source>
        <dbReference type="EMBL" id="AAB67234.1"/>
    </source>
</evidence>
<evidence type="ECO:0000312" key="7">
    <source>
        <dbReference type="EMBL" id="BAB02170.1"/>
    </source>
</evidence>
<protein>
    <recommendedName>
        <fullName>Metallothionein-like protein 3</fullName>
        <shortName>MT-3</shortName>
    </recommendedName>
</protein>
<feature type="chain" id="PRO_0000434001" description="Metallothionein-like protein 3">
    <location>
        <begin position="1"/>
        <end position="69"/>
    </location>
</feature>
<organism>
    <name type="scientific">Arabidopsis thaliana</name>
    <name type="common">Mouse-ear cress</name>
    <dbReference type="NCBI Taxonomy" id="3702"/>
    <lineage>
        <taxon>Eukaryota</taxon>
        <taxon>Viridiplantae</taxon>
        <taxon>Streptophyta</taxon>
        <taxon>Embryophyta</taxon>
        <taxon>Tracheophyta</taxon>
        <taxon>Spermatophyta</taxon>
        <taxon>Magnoliopsida</taxon>
        <taxon>eudicotyledons</taxon>
        <taxon>Gunneridae</taxon>
        <taxon>Pentapetalae</taxon>
        <taxon>rosids</taxon>
        <taxon>malvids</taxon>
        <taxon>Brassicales</taxon>
        <taxon>Brassicaceae</taxon>
        <taxon>Camelineae</taxon>
        <taxon>Arabidopsis</taxon>
    </lineage>
</organism>
<gene>
    <name evidence="6" type="primary">MT3</name>
    <name evidence="5" type="ordered locus">At3g15353</name>
    <name evidence="7" type="ORF">K7L4.21</name>
</gene>
<reference key="1">
    <citation type="submission" date="1997-07" db="EMBL/GenBank/DDBJ databases">
        <title>Arabidopsis thaliana metallothionein-like protein (MT3) gene.</title>
        <authorList>
            <person name="Bundithya W."/>
            <person name="Goldsbrough P.B."/>
        </authorList>
    </citation>
    <scope>NUCLEOTIDE SEQUENCE [GENOMIC DNA]</scope>
    <source>
        <strain>cv. Columbia</strain>
    </source>
</reference>
<reference key="2">
    <citation type="journal article" date="2000" name="DNA Res.">
        <title>Structural analysis of Arabidopsis thaliana chromosome 3. II. Sequence features of the 4,251,695 bp regions covered by 90 P1, TAC and BAC clones.</title>
        <authorList>
            <person name="Kaneko T."/>
            <person name="Katoh T."/>
            <person name="Sato S."/>
            <person name="Nakamura Y."/>
            <person name="Asamizu E."/>
            <person name="Tabata S."/>
        </authorList>
    </citation>
    <scope>NUCLEOTIDE SEQUENCE [LARGE SCALE GENOMIC DNA]</scope>
    <source>
        <strain>cv. Columbia</strain>
    </source>
</reference>
<reference key="3">
    <citation type="journal article" date="2017" name="Plant J.">
        <title>Araport11: a complete reannotation of the Arabidopsis thaliana reference genome.</title>
        <authorList>
            <person name="Cheng C.Y."/>
            <person name="Krishnakumar V."/>
            <person name="Chan A.P."/>
            <person name="Thibaud-Nissen F."/>
            <person name="Schobel S."/>
            <person name="Town C.D."/>
        </authorList>
    </citation>
    <scope>GENOME REANNOTATION</scope>
    <source>
        <strain>cv. Columbia</strain>
    </source>
</reference>
<reference key="4">
    <citation type="journal article" date="2003" name="Science">
        <title>Empirical analysis of transcriptional activity in the Arabidopsis genome.</title>
        <authorList>
            <person name="Yamada K."/>
            <person name="Lim J."/>
            <person name="Dale J.M."/>
            <person name="Chen H."/>
            <person name="Shinn P."/>
            <person name="Palm C.J."/>
            <person name="Southwick A.M."/>
            <person name="Wu H.C."/>
            <person name="Kim C.J."/>
            <person name="Nguyen M."/>
            <person name="Pham P.K."/>
            <person name="Cheuk R.F."/>
            <person name="Karlin-Newmann G."/>
            <person name="Liu S.X."/>
            <person name="Lam B."/>
            <person name="Sakano H."/>
            <person name="Wu T."/>
            <person name="Yu G."/>
            <person name="Miranda M."/>
            <person name="Quach H.L."/>
            <person name="Tripp M."/>
            <person name="Chang C.H."/>
            <person name="Lee J.M."/>
            <person name="Toriumi M.J."/>
            <person name="Chan M.M."/>
            <person name="Tang C.C."/>
            <person name="Onodera C.S."/>
            <person name="Deng J.M."/>
            <person name="Akiyama K."/>
            <person name="Ansari Y."/>
            <person name="Arakawa T."/>
            <person name="Banh J."/>
            <person name="Banno F."/>
            <person name="Bowser L."/>
            <person name="Brooks S.Y."/>
            <person name="Carninci P."/>
            <person name="Chao Q."/>
            <person name="Choy N."/>
            <person name="Enju A."/>
            <person name="Goldsmith A.D."/>
            <person name="Gurjal M."/>
            <person name="Hansen N.F."/>
            <person name="Hayashizaki Y."/>
            <person name="Johnson-Hopson C."/>
            <person name="Hsuan V.W."/>
            <person name="Iida K."/>
            <person name="Karnes M."/>
            <person name="Khan S."/>
            <person name="Koesema E."/>
            <person name="Ishida J."/>
            <person name="Jiang P.X."/>
            <person name="Jones T."/>
            <person name="Kawai J."/>
            <person name="Kamiya A."/>
            <person name="Meyers C."/>
            <person name="Nakajima M."/>
            <person name="Narusaka M."/>
            <person name="Seki M."/>
            <person name="Sakurai T."/>
            <person name="Satou M."/>
            <person name="Tamse R."/>
            <person name="Vaysberg M."/>
            <person name="Wallender E.K."/>
            <person name="Wong C."/>
            <person name="Yamamura Y."/>
            <person name="Yuan S."/>
            <person name="Shinozaki K."/>
            <person name="Davis R.W."/>
            <person name="Theologis A."/>
            <person name="Ecker J.R."/>
        </authorList>
    </citation>
    <scope>NUCLEOTIDE SEQUENCE [LARGE SCALE MRNA]</scope>
    <source>
        <strain>cv. Columbia</strain>
    </source>
</reference>
<reference key="5">
    <citation type="submission" date="2006-07" db="EMBL/GenBank/DDBJ databases">
        <title>Large-scale analysis of RIKEN Arabidopsis full-length (RAFL) cDNAs.</title>
        <authorList>
            <person name="Totoki Y."/>
            <person name="Seki M."/>
            <person name="Ishida J."/>
            <person name="Nakajima M."/>
            <person name="Enju A."/>
            <person name="Kamiya A."/>
            <person name="Narusaka M."/>
            <person name="Shin-i T."/>
            <person name="Nakagawa M."/>
            <person name="Sakamoto N."/>
            <person name="Oishi K."/>
            <person name="Kohara Y."/>
            <person name="Kobayashi M."/>
            <person name="Toyoda A."/>
            <person name="Sakaki Y."/>
            <person name="Sakurai T."/>
            <person name="Iida K."/>
            <person name="Akiyama K."/>
            <person name="Satou M."/>
            <person name="Toyoda T."/>
            <person name="Konagaya A."/>
            <person name="Carninci P."/>
            <person name="Kawai J."/>
            <person name="Hayashizaki Y."/>
            <person name="Shinozaki K."/>
        </authorList>
    </citation>
    <scope>NUCLEOTIDE SEQUENCE [LARGE SCALE MRNA]</scope>
    <source>
        <strain>cv. Columbia</strain>
    </source>
</reference>
<reference key="6">
    <citation type="submission" date="2002-03" db="EMBL/GenBank/DDBJ databases">
        <title>Full-length cDNA from Arabidopsis thaliana.</title>
        <authorList>
            <person name="Brover V.V."/>
            <person name="Troukhan M.E."/>
            <person name="Alexandrov N.A."/>
            <person name="Lu Y.-P."/>
            <person name="Flavell R.B."/>
            <person name="Feldmann K.A."/>
        </authorList>
    </citation>
    <scope>NUCLEOTIDE SEQUENCE [LARGE SCALE MRNA]</scope>
</reference>
<reference key="7">
    <citation type="journal article" date="1997" name="Plant Physiol.">
        <title>Purification and immunological identification of metallothioneins 1 and 2 from Arabidopsis thaliana.</title>
        <authorList>
            <person name="Murphy A."/>
            <person name="Zhou J."/>
            <person name="Goldsbrough P.B."/>
            <person name="Taiz L."/>
        </authorList>
    </citation>
    <scope>PROTEIN SEQUENCE OF 1-8; 42-45 AND 52-69</scope>
</reference>
<reference key="8">
    <citation type="journal article" date="2003" name="New Phytol.">
        <title>Characterization of the Arabidopsis metallothionein gene family: tissue-specific expression and induction during senescence and in response to copper.</title>
        <authorList>
            <person name="Guo W.J."/>
            <person name="Bundithya W."/>
            <person name="Goldsbrough P.B."/>
        </authorList>
    </citation>
    <scope>TISSUE SPECIFICITY</scope>
</reference>
<reference key="9">
    <citation type="journal article" date="2008" name="Plant Physiol.">
        <title>Examining the specific contributions of individual Arabidopsis metallothioneins to copper distribution and metal tolerance.</title>
        <authorList>
            <person name="Guo W.J."/>
            <person name="Meetam M."/>
            <person name="Goldsbrough P.B."/>
        </authorList>
    </citation>
    <scope>FUNCTION</scope>
</reference>
<reference key="10">
    <citation type="journal article" date="2014" name="New Phytol.">
        <title>Metallothionein deficiency impacts copper accumulation and redistribution in leaves and seeds of Arabidopsis.</title>
        <authorList>
            <person name="Benatti M.R."/>
            <person name="Yookongkaew N."/>
            <person name="Meetam M."/>
            <person name="Guo W.J."/>
            <person name="Punyasuk N."/>
            <person name="Abuqamar S."/>
            <person name="Goldsbrough P."/>
        </authorList>
    </citation>
    <scope>FUNCTION</scope>
</reference>
<keyword id="KW-0025">Alternative splicing</keyword>
<keyword id="KW-0903">Direct protein sequencing</keyword>
<keyword id="KW-0479">Metal-binding</keyword>
<keyword id="KW-0480">Metal-thiolate cluster</keyword>
<keyword id="KW-1185">Reference proteome</keyword>
<name>MT3_ARATH</name>
<sequence>MSSNCGSCDCADKTQCVKKGTSYTFDIVETQESYKEAMIMDVGAEENNANCKCKCGSSCSCVNCTCCPN</sequence>
<comment type="function">
    <text evidence="1 2 4">Metallothioneins have a high content of cysteine residues that bind various heavy metals (Probable). Functions as a metal chelator of copper (Cu) and zinc (Zn) (PubMed:18287486). Plays a role in Cu homeostasis, specifically in the remobilization of Cu from senescing leaves. The mobilization of Cu from internal sources is important for seed development (PubMed:24635746).</text>
</comment>
<comment type="alternative products">
    <event type="alternative splicing"/>
    <isoform>
        <id>O22433-1</id>
        <name>1</name>
        <sequence type="displayed"/>
    </isoform>
    <text evidence="4">A number of isoforms are produced. According to EST sequences.</text>
</comment>
<comment type="tissue specificity">
    <text evidence="3">Expressed in leaf mesophyll cells, root tips, and at low levels in anthers.</text>
</comment>
<comment type="similarity">
    <text evidence="4">Belongs to the metallothionein superfamily. Type 15 family.</text>
</comment>
<proteinExistence type="evidence at protein level"/>
<dbReference type="EMBL" id="AF013959">
    <property type="protein sequence ID" value="AAB67234.1"/>
    <property type="molecule type" value="Genomic_DNA"/>
</dbReference>
<dbReference type="EMBL" id="AP000413">
    <property type="protein sequence ID" value="BAB02170.1"/>
    <property type="molecule type" value="Genomic_DNA"/>
</dbReference>
<dbReference type="EMBL" id="CP002686">
    <property type="protein sequence ID" value="AEE75655.1"/>
    <property type="molecule type" value="Genomic_DNA"/>
</dbReference>
<dbReference type="EMBL" id="AY074340">
    <property type="protein sequence ID" value="AAL67036.1"/>
    <property type="molecule type" value="mRNA"/>
</dbReference>
<dbReference type="EMBL" id="AY091386">
    <property type="protein sequence ID" value="AAM14325.1"/>
    <property type="molecule type" value="mRNA"/>
</dbReference>
<dbReference type="EMBL" id="AK229545">
    <property type="protein sequence ID" value="BAF01398.1"/>
    <property type="molecule type" value="mRNA"/>
</dbReference>
<dbReference type="EMBL" id="AY087213">
    <property type="protein sequence ID" value="AAM64769.1"/>
    <property type="molecule type" value="mRNA"/>
</dbReference>
<dbReference type="RefSeq" id="NP_566509.1">
    <molecule id="O22433-1"/>
    <property type="nucleotide sequence ID" value="NM_112401.2"/>
</dbReference>
<dbReference type="FunCoup" id="O22433">
    <property type="interactions" value="93"/>
</dbReference>
<dbReference type="STRING" id="3702.O22433"/>
<dbReference type="PaxDb" id="3702-AT3G15353.1"/>
<dbReference type="ProteomicsDB" id="250899">
    <molecule id="O22433-1"/>
</dbReference>
<dbReference type="EnsemblPlants" id="AT3G15353.1">
    <molecule id="O22433-1"/>
    <property type="protein sequence ID" value="AT3G15353.1"/>
    <property type="gene ID" value="AT3G15353"/>
</dbReference>
<dbReference type="GeneID" id="820771"/>
<dbReference type="Gramene" id="AT3G15353.1">
    <molecule id="O22433-1"/>
    <property type="protein sequence ID" value="AT3G15353.1"/>
    <property type="gene ID" value="AT3G15353"/>
</dbReference>
<dbReference type="KEGG" id="ath:AT3G15353"/>
<dbReference type="Araport" id="AT3G15353"/>
<dbReference type="TAIR" id="AT3G15353">
    <property type="gene designation" value="MT3"/>
</dbReference>
<dbReference type="eggNOG" id="ENOG502S7B3">
    <property type="taxonomic scope" value="Eukaryota"/>
</dbReference>
<dbReference type="HOGENOM" id="CLU_204176_0_0_1"/>
<dbReference type="InParanoid" id="O22433"/>
<dbReference type="OMA" id="ASCTCVN"/>
<dbReference type="OrthoDB" id="739871at2759"/>
<dbReference type="PhylomeDB" id="O22433"/>
<dbReference type="PRO" id="PR:O22433"/>
<dbReference type="Proteomes" id="UP000006548">
    <property type="component" value="Chromosome 3"/>
</dbReference>
<dbReference type="ExpressionAtlas" id="O22433">
    <property type="expression patterns" value="baseline and differential"/>
</dbReference>
<dbReference type="GO" id="GO:0005507">
    <property type="term" value="F:copper ion binding"/>
    <property type="evidence" value="ECO:0000314"/>
    <property type="project" value="TAIR"/>
</dbReference>
<dbReference type="GO" id="GO:0008270">
    <property type="term" value="F:zinc ion binding"/>
    <property type="evidence" value="ECO:0000314"/>
    <property type="project" value="UniProtKB"/>
</dbReference>
<dbReference type="GO" id="GO:1990748">
    <property type="term" value="P:cellular detoxification"/>
    <property type="evidence" value="ECO:0000250"/>
    <property type="project" value="UniProtKB"/>
</dbReference>
<dbReference type="GO" id="GO:0006878">
    <property type="term" value="P:intracellular copper ion homeostasis"/>
    <property type="evidence" value="ECO:0000250"/>
    <property type="project" value="TAIR"/>
</dbReference>
<dbReference type="InterPro" id="IPR044671">
    <property type="entry name" value="MT3"/>
</dbReference>
<dbReference type="PANTHER" id="PTHR33357">
    <property type="entry name" value="METALLOTHIONEIN-LIKE PROTEIN 3"/>
    <property type="match status" value="1"/>
</dbReference>
<dbReference type="PANTHER" id="PTHR33357:SF3">
    <property type="entry name" value="METALLOTHIONEIN-LIKE PROTEIN 3"/>
    <property type="match status" value="1"/>
</dbReference>